<proteinExistence type="inferred from homology"/>
<accession>A3CVW4</accession>
<sequence length="410" mass="45773">MLQKPRGTRDFLPDEMERRRLIERRMRDAARRWGYREVCTPDFEHLELFTMKSGEGIIQEMYVFEDKGGRKMTLRPEVTAAVLRMYVNEGKVLPKPLRWCYFADCFRYERPQKGRYRQFWQFGVELIGADTASADAEVIMLADDTLRSTGVTFDLHVGHLAPMKHLLSGLDPGDQRAIMAYLDKHDQKGLEAVLFGKNLTHLAEPLAALGECRTVSEVFEVAGDVPERARIEETFTLLESQEIDYRPDFGIARGLDYYTGMVFEGFAKNLGAENQILGGGTYRLAHLFGGDDVASCGFAIGFDRVMVSIGDFELAHEPVVGVVCTPEGRARALEVARAFREAGVRAEADLMQRGMGAQVSHAAKTADFAAVLGKREVEAGTVTLKNLHSGEQQERSLEEAIAEVARHGAC</sequence>
<organism>
    <name type="scientific">Methanoculleus marisnigri (strain ATCC 35101 / DSM 1498 / JR1)</name>
    <dbReference type="NCBI Taxonomy" id="368407"/>
    <lineage>
        <taxon>Archaea</taxon>
        <taxon>Methanobacteriati</taxon>
        <taxon>Methanobacteriota</taxon>
        <taxon>Stenosarchaea group</taxon>
        <taxon>Methanomicrobia</taxon>
        <taxon>Methanomicrobiales</taxon>
        <taxon>Methanomicrobiaceae</taxon>
        <taxon>Methanoculleus</taxon>
    </lineage>
</organism>
<protein>
    <recommendedName>
        <fullName evidence="1">Histidine--tRNA ligase</fullName>
        <ecNumber evidence="1">6.1.1.21</ecNumber>
    </recommendedName>
    <alternativeName>
        <fullName evidence="1">Histidyl-tRNA synthetase</fullName>
        <shortName evidence="1">HisRS</shortName>
    </alternativeName>
</protein>
<comment type="catalytic activity">
    <reaction evidence="1">
        <text>tRNA(His) + L-histidine + ATP = L-histidyl-tRNA(His) + AMP + diphosphate + H(+)</text>
        <dbReference type="Rhea" id="RHEA:17313"/>
        <dbReference type="Rhea" id="RHEA-COMP:9665"/>
        <dbReference type="Rhea" id="RHEA-COMP:9689"/>
        <dbReference type="ChEBI" id="CHEBI:15378"/>
        <dbReference type="ChEBI" id="CHEBI:30616"/>
        <dbReference type="ChEBI" id="CHEBI:33019"/>
        <dbReference type="ChEBI" id="CHEBI:57595"/>
        <dbReference type="ChEBI" id="CHEBI:78442"/>
        <dbReference type="ChEBI" id="CHEBI:78527"/>
        <dbReference type="ChEBI" id="CHEBI:456215"/>
        <dbReference type="EC" id="6.1.1.21"/>
    </reaction>
</comment>
<comment type="subcellular location">
    <subcellularLocation>
        <location evidence="1">Cytoplasm</location>
    </subcellularLocation>
</comment>
<comment type="similarity">
    <text evidence="1">Belongs to the class-II aminoacyl-tRNA synthetase family.</text>
</comment>
<keyword id="KW-0030">Aminoacyl-tRNA synthetase</keyword>
<keyword id="KW-0067">ATP-binding</keyword>
<keyword id="KW-0963">Cytoplasm</keyword>
<keyword id="KW-0436">Ligase</keyword>
<keyword id="KW-0547">Nucleotide-binding</keyword>
<keyword id="KW-0648">Protein biosynthesis</keyword>
<gene>
    <name evidence="1" type="primary">hisS</name>
    <name type="ordered locus">Memar_1585</name>
</gene>
<feature type="chain" id="PRO_1000016393" description="Histidine--tRNA ligase">
    <location>
        <begin position="1"/>
        <end position="410"/>
    </location>
</feature>
<evidence type="ECO:0000255" key="1">
    <source>
        <dbReference type="HAMAP-Rule" id="MF_00127"/>
    </source>
</evidence>
<name>SYH_METMJ</name>
<dbReference type="EC" id="6.1.1.21" evidence="1"/>
<dbReference type="EMBL" id="CP000562">
    <property type="protein sequence ID" value="ABN57514.1"/>
    <property type="molecule type" value="Genomic_DNA"/>
</dbReference>
<dbReference type="RefSeq" id="WP_011844425.1">
    <property type="nucleotide sequence ID" value="NC_009051.1"/>
</dbReference>
<dbReference type="SMR" id="A3CVW4"/>
<dbReference type="STRING" id="368407.Memar_1585"/>
<dbReference type="GeneID" id="4847490"/>
<dbReference type="GeneID" id="76729654"/>
<dbReference type="KEGG" id="mem:Memar_1585"/>
<dbReference type="eggNOG" id="arCOG00404">
    <property type="taxonomic scope" value="Archaea"/>
</dbReference>
<dbReference type="HOGENOM" id="CLU_025113_3_1_2"/>
<dbReference type="OrthoDB" id="8659at2157"/>
<dbReference type="Proteomes" id="UP000002146">
    <property type="component" value="Chromosome"/>
</dbReference>
<dbReference type="GO" id="GO:0005737">
    <property type="term" value="C:cytoplasm"/>
    <property type="evidence" value="ECO:0007669"/>
    <property type="project" value="UniProtKB-SubCell"/>
</dbReference>
<dbReference type="GO" id="GO:0005524">
    <property type="term" value="F:ATP binding"/>
    <property type="evidence" value="ECO:0007669"/>
    <property type="project" value="UniProtKB-UniRule"/>
</dbReference>
<dbReference type="GO" id="GO:0004821">
    <property type="term" value="F:histidine-tRNA ligase activity"/>
    <property type="evidence" value="ECO:0007669"/>
    <property type="project" value="UniProtKB-UniRule"/>
</dbReference>
<dbReference type="GO" id="GO:0006427">
    <property type="term" value="P:histidyl-tRNA aminoacylation"/>
    <property type="evidence" value="ECO:0007669"/>
    <property type="project" value="UniProtKB-UniRule"/>
</dbReference>
<dbReference type="CDD" id="cd00773">
    <property type="entry name" value="HisRS-like_core"/>
    <property type="match status" value="1"/>
</dbReference>
<dbReference type="CDD" id="cd00859">
    <property type="entry name" value="HisRS_anticodon"/>
    <property type="match status" value="1"/>
</dbReference>
<dbReference type="Gene3D" id="3.40.50.800">
    <property type="entry name" value="Anticodon-binding domain"/>
    <property type="match status" value="1"/>
</dbReference>
<dbReference type="Gene3D" id="3.30.930.10">
    <property type="entry name" value="Bira Bifunctional Protein, Domain 2"/>
    <property type="match status" value="1"/>
</dbReference>
<dbReference type="HAMAP" id="MF_00127">
    <property type="entry name" value="His_tRNA_synth"/>
    <property type="match status" value="1"/>
</dbReference>
<dbReference type="InterPro" id="IPR006195">
    <property type="entry name" value="aa-tRNA-synth_II"/>
</dbReference>
<dbReference type="InterPro" id="IPR045864">
    <property type="entry name" value="aa-tRNA-synth_II/BPL/LPL"/>
</dbReference>
<dbReference type="InterPro" id="IPR004154">
    <property type="entry name" value="Anticodon-bd"/>
</dbReference>
<dbReference type="InterPro" id="IPR036621">
    <property type="entry name" value="Anticodon-bd_dom_sf"/>
</dbReference>
<dbReference type="InterPro" id="IPR015807">
    <property type="entry name" value="His-tRNA-ligase"/>
</dbReference>
<dbReference type="InterPro" id="IPR041715">
    <property type="entry name" value="HisRS-like_core"/>
</dbReference>
<dbReference type="InterPro" id="IPR004516">
    <property type="entry name" value="HisRS/HisZ"/>
</dbReference>
<dbReference type="InterPro" id="IPR033656">
    <property type="entry name" value="HisRS_anticodon"/>
</dbReference>
<dbReference type="NCBIfam" id="TIGR00442">
    <property type="entry name" value="hisS"/>
    <property type="match status" value="1"/>
</dbReference>
<dbReference type="PANTHER" id="PTHR43707:SF1">
    <property type="entry name" value="HISTIDINE--TRNA LIGASE, MITOCHONDRIAL-RELATED"/>
    <property type="match status" value="1"/>
</dbReference>
<dbReference type="PANTHER" id="PTHR43707">
    <property type="entry name" value="HISTIDYL-TRNA SYNTHETASE"/>
    <property type="match status" value="1"/>
</dbReference>
<dbReference type="Pfam" id="PF03129">
    <property type="entry name" value="HGTP_anticodon"/>
    <property type="match status" value="1"/>
</dbReference>
<dbReference type="Pfam" id="PF13393">
    <property type="entry name" value="tRNA-synt_His"/>
    <property type="match status" value="1"/>
</dbReference>
<dbReference type="PIRSF" id="PIRSF001549">
    <property type="entry name" value="His-tRNA_synth"/>
    <property type="match status" value="1"/>
</dbReference>
<dbReference type="SUPFAM" id="SSF52954">
    <property type="entry name" value="Class II aaRS ABD-related"/>
    <property type="match status" value="1"/>
</dbReference>
<dbReference type="SUPFAM" id="SSF55681">
    <property type="entry name" value="Class II aaRS and biotin synthetases"/>
    <property type="match status" value="1"/>
</dbReference>
<dbReference type="PROSITE" id="PS50862">
    <property type="entry name" value="AA_TRNA_LIGASE_II"/>
    <property type="match status" value="1"/>
</dbReference>
<reference key="1">
    <citation type="journal article" date="2009" name="Stand. Genomic Sci.">
        <title>Complete genome sequence of Methanoculleus marisnigri Romesser et al. 1981 type strain JR1.</title>
        <authorList>
            <person name="Anderson I.J."/>
            <person name="Sieprawska-Lupa M."/>
            <person name="Lapidus A."/>
            <person name="Nolan M."/>
            <person name="Copeland A."/>
            <person name="Glavina Del Rio T."/>
            <person name="Tice H."/>
            <person name="Dalin E."/>
            <person name="Barry K."/>
            <person name="Saunders E."/>
            <person name="Han C."/>
            <person name="Brettin T."/>
            <person name="Detter J.C."/>
            <person name="Bruce D."/>
            <person name="Mikhailova N."/>
            <person name="Pitluck S."/>
            <person name="Hauser L."/>
            <person name="Land M."/>
            <person name="Lucas S."/>
            <person name="Richardson P."/>
            <person name="Whitman W.B."/>
            <person name="Kyrpides N.C."/>
        </authorList>
    </citation>
    <scope>NUCLEOTIDE SEQUENCE [LARGE SCALE GENOMIC DNA]</scope>
    <source>
        <strain>ATCC 35101 / DSM 1498 / JR1</strain>
    </source>
</reference>